<proteinExistence type="inferred from homology"/>
<gene>
    <name evidence="1" type="primary">rplU</name>
    <name type="ordered locus">SUB0725</name>
</gene>
<accession>B9DU54</accession>
<keyword id="KW-1185">Reference proteome</keyword>
<keyword id="KW-0687">Ribonucleoprotein</keyword>
<keyword id="KW-0689">Ribosomal protein</keyword>
<keyword id="KW-0694">RNA-binding</keyword>
<keyword id="KW-0699">rRNA-binding</keyword>
<feature type="chain" id="PRO_1000166744" description="Large ribosomal subunit protein bL21">
    <location>
        <begin position="1"/>
        <end position="104"/>
    </location>
</feature>
<comment type="function">
    <text evidence="1">This protein binds to 23S rRNA in the presence of protein L20.</text>
</comment>
<comment type="subunit">
    <text evidence="1">Part of the 50S ribosomal subunit. Contacts protein L20.</text>
</comment>
<comment type="similarity">
    <text evidence="1">Belongs to the bacterial ribosomal protein bL21 family.</text>
</comment>
<evidence type="ECO:0000255" key="1">
    <source>
        <dbReference type="HAMAP-Rule" id="MF_01363"/>
    </source>
</evidence>
<evidence type="ECO:0000305" key="2"/>
<dbReference type="EMBL" id="AM946015">
    <property type="protein sequence ID" value="CAR41648.1"/>
    <property type="molecule type" value="Genomic_DNA"/>
</dbReference>
<dbReference type="RefSeq" id="WP_012658242.1">
    <property type="nucleotide sequence ID" value="NC_012004.1"/>
</dbReference>
<dbReference type="SMR" id="B9DU54"/>
<dbReference type="STRING" id="218495.SUB0725"/>
<dbReference type="GeneID" id="93826009"/>
<dbReference type="KEGG" id="sub:SUB0725"/>
<dbReference type="eggNOG" id="COG0261">
    <property type="taxonomic scope" value="Bacteria"/>
</dbReference>
<dbReference type="HOGENOM" id="CLU_061463_3_1_9"/>
<dbReference type="OrthoDB" id="9813334at2"/>
<dbReference type="Proteomes" id="UP000000449">
    <property type="component" value="Chromosome"/>
</dbReference>
<dbReference type="GO" id="GO:0005737">
    <property type="term" value="C:cytoplasm"/>
    <property type="evidence" value="ECO:0007669"/>
    <property type="project" value="UniProtKB-ARBA"/>
</dbReference>
<dbReference type="GO" id="GO:1990904">
    <property type="term" value="C:ribonucleoprotein complex"/>
    <property type="evidence" value="ECO:0007669"/>
    <property type="project" value="UniProtKB-KW"/>
</dbReference>
<dbReference type="GO" id="GO:0005840">
    <property type="term" value="C:ribosome"/>
    <property type="evidence" value="ECO:0007669"/>
    <property type="project" value="UniProtKB-KW"/>
</dbReference>
<dbReference type="GO" id="GO:0019843">
    <property type="term" value="F:rRNA binding"/>
    <property type="evidence" value="ECO:0007669"/>
    <property type="project" value="UniProtKB-UniRule"/>
</dbReference>
<dbReference type="GO" id="GO:0003735">
    <property type="term" value="F:structural constituent of ribosome"/>
    <property type="evidence" value="ECO:0007669"/>
    <property type="project" value="InterPro"/>
</dbReference>
<dbReference type="GO" id="GO:0006412">
    <property type="term" value="P:translation"/>
    <property type="evidence" value="ECO:0007669"/>
    <property type="project" value="UniProtKB-UniRule"/>
</dbReference>
<dbReference type="HAMAP" id="MF_01363">
    <property type="entry name" value="Ribosomal_bL21"/>
    <property type="match status" value="1"/>
</dbReference>
<dbReference type="InterPro" id="IPR028909">
    <property type="entry name" value="bL21-like"/>
</dbReference>
<dbReference type="InterPro" id="IPR036164">
    <property type="entry name" value="bL21-like_sf"/>
</dbReference>
<dbReference type="InterPro" id="IPR001787">
    <property type="entry name" value="Ribosomal_bL21"/>
</dbReference>
<dbReference type="InterPro" id="IPR018258">
    <property type="entry name" value="Ribosomal_bL21_CS"/>
</dbReference>
<dbReference type="NCBIfam" id="TIGR00061">
    <property type="entry name" value="L21"/>
    <property type="match status" value="1"/>
</dbReference>
<dbReference type="PANTHER" id="PTHR21349">
    <property type="entry name" value="50S RIBOSOMAL PROTEIN L21"/>
    <property type="match status" value="1"/>
</dbReference>
<dbReference type="PANTHER" id="PTHR21349:SF0">
    <property type="entry name" value="LARGE RIBOSOMAL SUBUNIT PROTEIN BL21M"/>
    <property type="match status" value="1"/>
</dbReference>
<dbReference type="Pfam" id="PF00829">
    <property type="entry name" value="Ribosomal_L21p"/>
    <property type="match status" value="1"/>
</dbReference>
<dbReference type="SUPFAM" id="SSF141091">
    <property type="entry name" value="L21p-like"/>
    <property type="match status" value="1"/>
</dbReference>
<dbReference type="PROSITE" id="PS01169">
    <property type="entry name" value="RIBOSOMAL_L21"/>
    <property type="match status" value="1"/>
</dbReference>
<name>RL21_STRU0</name>
<protein>
    <recommendedName>
        <fullName evidence="1">Large ribosomal subunit protein bL21</fullName>
    </recommendedName>
    <alternativeName>
        <fullName evidence="2">50S ribosomal protein L21</fullName>
    </alternativeName>
</protein>
<reference key="1">
    <citation type="journal article" date="2009" name="BMC Genomics">
        <title>Evidence for niche adaptation in the genome of the bovine pathogen Streptococcus uberis.</title>
        <authorList>
            <person name="Ward P.N."/>
            <person name="Holden M.T.G."/>
            <person name="Leigh J.A."/>
            <person name="Lennard N."/>
            <person name="Bignell A."/>
            <person name="Barron A."/>
            <person name="Clark L."/>
            <person name="Quail M.A."/>
            <person name="Woodward J."/>
            <person name="Barrell B.G."/>
            <person name="Egan S.A."/>
            <person name="Field T.R."/>
            <person name="Maskell D."/>
            <person name="Kehoe M."/>
            <person name="Dowson C.G."/>
            <person name="Chanter N."/>
            <person name="Whatmore A.M."/>
            <person name="Bentley S.D."/>
            <person name="Parkhill J."/>
        </authorList>
    </citation>
    <scope>NUCLEOTIDE SEQUENCE [LARGE SCALE GENOMIC DNA]</scope>
    <source>
        <strain>ATCC BAA-854 / 0140J</strain>
    </source>
</reference>
<organism>
    <name type="scientific">Streptococcus uberis (strain ATCC BAA-854 / 0140J)</name>
    <dbReference type="NCBI Taxonomy" id="218495"/>
    <lineage>
        <taxon>Bacteria</taxon>
        <taxon>Bacillati</taxon>
        <taxon>Bacillota</taxon>
        <taxon>Bacilli</taxon>
        <taxon>Lactobacillales</taxon>
        <taxon>Streptococcaceae</taxon>
        <taxon>Streptococcus</taxon>
    </lineage>
</organism>
<sequence length="104" mass="11184">MSTYAIIKTGGKQVKVEVGQAIYVEKIDAEAGAEVTFNEVVLVGGDKTVVGTPIVEGATVVGTVEKQGKQKKVVTFKYKPKKGSHRKQGHRQPYTKIVIDAINA</sequence>